<name>ARGR_LACDA</name>
<feature type="chain" id="PRO_1000023573" description="Arginine repressor">
    <location>
        <begin position="1"/>
        <end position="157"/>
    </location>
</feature>
<reference key="1">
    <citation type="journal article" date="2006" name="Proc. Natl. Acad. Sci. U.S.A.">
        <title>The complete genome sequence of Lactobacillus bulgaricus reveals extensive and ongoing reductive evolution.</title>
        <authorList>
            <person name="van de Guchte M."/>
            <person name="Penaud S."/>
            <person name="Grimaldi C."/>
            <person name="Barbe V."/>
            <person name="Bryson K."/>
            <person name="Nicolas P."/>
            <person name="Robert C."/>
            <person name="Oztas S."/>
            <person name="Mangenot S."/>
            <person name="Couloux A."/>
            <person name="Loux V."/>
            <person name="Dervyn R."/>
            <person name="Bossy R."/>
            <person name="Bolotin A."/>
            <person name="Batto J.-M."/>
            <person name="Walunas T."/>
            <person name="Gibrat J.-F."/>
            <person name="Bessieres P."/>
            <person name="Weissenbach J."/>
            <person name="Ehrlich S.D."/>
            <person name="Maguin E."/>
        </authorList>
    </citation>
    <scope>NUCLEOTIDE SEQUENCE [LARGE SCALE GENOMIC DNA]</scope>
    <source>
        <strain>ATCC 11842 / DSM 20081 / BCRC 10696 / JCM 1002 / NBRC 13953 / NCIMB 11778 / NCTC 12712 / WDCM 00102 / Lb 14</strain>
    </source>
</reference>
<protein>
    <recommendedName>
        <fullName evidence="1">Arginine repressor</fullName>
    </recommendedName>
</protein>
<dbReference type="EMBL" id="CR954253">
    <property type="protein sequence ID" value="CAI97632.1"/>
    <property type="molecule type" value="Genomic_DNA"/>
</dbReference>
<dbReference type="RefSeq" id="WP_002879191.1">
    <property type="nucleotide sequence ID" value="NZ_JQAV01000019.1"/>
</dbReference>
<dbReference type="SMR" id="Q1GAN0"/>
<dbReference type="STRING" id="390333.Ldb0810"/>
<dbReference type="KEGG" id="ldb:Ldb0810"/>
<dbReference type="PATRIC" id="fig|390333.13.peg.887"/>
<dbReference type="eggNOG" id="COG1438">
    <property type="taxonomic scope" value="Bacteria"/>
</dbReference>
<dbReference type="HOGENOM" id="CLU_097103_3_0_9"/>
<dbReference type="BioCyc" id="LDEL390333:LDB_RS03560-MONOMER"/>
<dbReference type="UniPathway" id="UPA00068"/>
<dbReference type="Proteomes" id="UP000001259">
    <property type="component" value="Chromosome"/>
</dbReference>
<dbReference type="GO" id="GO:0005737">
    <property type="term" value="C:cytoplasm"/>
    <property type="evidence" value="ECO:0007669"/>
    <property type="project" value="UniProtKB-SubCell"/>
</dbReference>
<dbReference type="GO" id="GO:0034618">
    <property type="term" value="F:arginine binding"/>
    <property type="evidence" value="ECO:0007669"/>
    <property type="project" value="InterPro"/>
</dbReference>
<dbReference type="GO" id="GO:0003677">
    <property type="term" value="F:DNA binding"/>
    <property type="evidence" value="ECO:0007669"/>
    <property type="project" value="UniProtKB-KW"/>
</dbReference>
<dbReference type="GO" id="GO:0003700">
    <property type="term" value="F:DNA-binding transcription factor activity"/>
    <property type="evidence" value="ECO:0007669"/>
    <property type="project" value="UniProtKB-UniRule"/>
</dbReference>
<dbReference type="GO" id="GO:0006526">
    <property type="term" value="P:L-arginine biosynthetic process"/>
    <property type="evidence" value="ECO:0007669"/>
    <property type="project" value="UniProtKB-UniPathway"/>
</dbReference>
<dbReference type="GO" id="GO:0051259">
    <property type="term" value="P:protein complex oligomerization"/>
    <property type="evidence" value="ECO:0007669"/>
    <property type="project" value="InterPro"/>
</dbReference>
<dbReference type="GO" id="GO:1900079">
    <property type="term" value="P:regulation of arginine biosynthetic process"/>
    <property type="evidence" value="ECO:0007669"/>
    <property type="project" value="UniProtKB-UniRule"/>
</dbReference>
<dbReference type="Gene3D" id="3.30.1360.40">
    <property type="match status" value="1"/>
</dbReference>
<dbReference type="Gene3D" id="1.10.10.10">
    <property type="entry name" value="Winged helix-like DNA-binding domain superfamily/Winged helix DNA-binding domain"/>
    <property type="match status" value="1"/>
</dbReference>
<dbReference type="HAMAP" id="MF_00173">
    <property type="entry name" value="Arg_repressor"/>
    <property type="match status" value="1"/>
</dbReference>
<dbReference type="InterPro" id="IPR001669">
    <property type="entry name" value="Arg_repress"/>
</dbReference>
<dbReference type="InterPro" id="IPR020899">
    <property type="entry name" value="Arg_repress_C"/>
</dbReference>
<dbReference type="InterPro" id="IPR036251">
    <property type="entry name" value="Arg_repress_C_sf"/>
</dbReference>
<dbReference type="InterPro" id="IPR020900">
    <property type="entry name" value="Arg_repress_DNA-bd"/>
</dbReference>
<dbReference type="InterPro" id="IPR036388">
    <property type="entry name" value="WH-like_DNA-bd_sf"/>
</dbReference>
<dbReference type="InterPro" id="IPR036390">
    <property type="entry name" value="WH_DNA-bd_sf"/>
</dbReference>
<dbReference type="PANTHER" id="PTHR34471">
    <property type="entry name" value="ARGININE REPRESSOR"/>
    <property type="match status" value="1"/>
</dbReference>
<dbReference type="PANTHER" id="PTHR34471:SF1">
    <property type="entry name" value="ARGININE REPRESSOR"/>
    <property type="match status" value="1"/>
</dbReference>
<dbReference type="Pfam" id="PF01316">
    <property type="entry name" value="Arg_repressor"/>
    <property type="match status" value="1"/>
</dbReference>
<dbReference type="Pfam" id="PF02863">
    <property type="entry name" value="Arg_repressor_C"/>
    <property type="match status" value="1"/>
</dbReference>
<dbReference type="PRINTS" id="PR01467">
    <property type="entry name" value="ARGREPRESSOR"/>
</dbReference>
<dbReference type="SUPFAM" id="SSF55252">
    <property type="entry name" value="C-terminal domain of arginine repressor"/>
    <property type="match status" value="1"/>
</dbReference>
<dbReference type="SUPFAM" id="SSF46785">
    <property type="entry name" value="Winged helix' DNA-binding domain"/>
    <property type="match status" value="1"/>
</dbReference>
<sequence length="157" mass="17500">MNYKERRQLIYELIQTNKIETQEQLLLLLQAHGANATQATISRDIRALHISKVPDDDGRSYYVKAPSAAVNRERQLKDAIRERVATVTAVQFTVVIQTSMKLTYAPILAGLIDDIDNDDVVGTIAGTDTLLVILKDAEAAASFADWAQAIVKERKIY</sequence>
<gene>
    <name evidence="1" type="primary">argR</name>
    <name type="ordered locus">Ldb0810</name>
</gene>
<proteinExistence type="inferred from homology"/>
<keyword id="KW-0028">Amino-acid biosynthesis</keyword>
<keyword id="KW-0055">Arginine biosynthesis</keyword>
<keyword id="KW-0963">Cytoplasm</keyword>
<keyword id="KW-0238">DNA-binding</keyword>
<keyword id="KW-1185">Reference proteome</keyword>
<keyword id="KW-0678">Repressor</keyword>
<keyword id="KW-0804">Transcription</keyword>
<keyword id="KW-0805">Transcription regulation</keyword>
<comment type="function">
    <text evidence="1">Regulates arginine biosynthesis genes.</text>
</comment>
<comment type="pathway">
    <text>Amino-acid biosynthesis; L-arginine biosynthesis [regulation].</text>
</comment>
<comment type="subcellular location">
    <subcellularLocation>
        <location evidence="1">Cytoplasm</location>
    </subcellularLocation>
</comment>
<comment type="similarity">
    <text evidence="1">Belongs to the ArgR family.</text>
</comment>
<accession>Q1GAN0</accession>
<evidence type="ECO:0000255" key="1">
    <source>
        <dbReference type="HAMAP-Rule" id="MF_00173"/>
    </source>
</evidence>
<organism>
    <name type="scientific">Lactobacillus delbrueckii subsp. bulgaricus (strain ATCC 11842 / DSM 20081 / BCRC 10696 / JCM 1002 / NBRC 13953 / NCIMB 11778 / NCTC 12712 / WDCM 00102 / Lb 14)</name>
    <dbReference type="NCBI Taxonomy" id="390333"/>
    <lineage>
        <taxon>Bacteria</taxon>
        <taxon>Bacillati</taxon>
        <taxon>Bacillota</taxon>
        <taxon>Bacilli</taxon>
        <taxon>Lactobacillales</taxon>
        <taxon>Lactobacillaceae</taxon>
        <taxon>Lactobacillus</taxon>
    </lineage>
</organism>